<name>RABQ_DICDI</name>
<comment type="subcellular location">
    <subcellularLocation>
        <location evidence="2">Cell membrane</location>
        <topology evidence="2">Lipid-anchor</topology>
        <orientation evidence="2">Cytoplasmic side</orientation>
    </subcellularLocation>
</comment>
<comment type="similarity">
    <text evidence="2">Belongs to the small GTPase superfamily. Rab family.</text>
</comment>
<accession>Q55ET3</accession>
<dbReference type="EMBL" id="AAFI02000004">
    <property type="protein sequence ID" value="EAL72969.1"/>
    <property type="molecule type" value="Genomic_DNA"/>
</dbReference>
<dbReference type="RefSeq" id="XP_646937.1">
    <property type="nucleotide sequence ID" value="XM_641845.1"/>
</dbReference>
<dbReference type="SMR" id="Q55ET3"/>
<dbReference type="FunCoup" id="Q55ET3">
    <property type="interactions" value="5"/>
</dbReference>
<dbReference type="STRING" id="44689.Q55ET3"/>
<dbReference type="PaxDb" id="44689-DDB0229365"/>
<dbReference type="EnsemblProtists" id="EAL72969">
    <property type="protein sequence ID" value="EAL72969"/>
    <property type="gene ID" value="DDB_G0268760"/>
</dbReference>
<dbReference type="GeneID" id="8616625"/>
<dbReference type="KEGG" id="ddi:DDB_G0268760"/>
<dbReference type="dictyBase" id="DDB_G0268760">
    <property type="gene designation" value="rabQ"/>
</dbReference>
<dbReference type="VEuPathDB" id="AmoebaDB:DDB_G0268760"/>
<dbReference type="eggNOG" id="KOG0098">
    <property type="taxonomic scope" value="Eukaryota"/>
</dbReference>
<dbReference type="HOGENOM" id="CLU_041217_10_1_1"/>
<dbReference type="InParanoid" id="Q55ET3"/>
<dbReference type="OMA" id="RMYKVVM"/>
<dbReference type="PhylomeDB" id="Q55ET3"/>
<dbReference type="Reactome" id="R-DDI-6811438">
    <property type="pathway name" value="Intra-Golgi traffic"/>
</dbReference>
<dbReference type="Reactome" id="R-DDI-8873719">
    <property type="pathway name" value="RAB geranylgeranylation"/>
</dbReference>
<dbReference type="PRO" id="PR:Q55ET3"/>
<dbReference type="Proteomes" id="UP000002195">
    <property type="component" value="Chromosome 1"/>
</dbReference>
<dbReference type="GO" id="GO:0005794">
    <property type="term" value="C:Golgi apparatus"/>
    <property type="evidence" value="ECO:0000318"/>
    <property type="project" value="GO_Central"/>
</dbReference>
<dbReference type="GO" id="GO:0000139">
    <property type="term" value="C:Golgi membrane"/>
    <property type="evidence" value="ECO:0000318"/>
    <property type="project" value="GO_Central"/>
</dbReference>
<dbReference type="GO" id="GO:0005811">
    <property type="term" value="C:lipid droplet"/>
    <property type="evidence" value="ECO:0007005"/>
    <property type="project" value="dictyBase"/>
</dbReference>
<dbReference type="GO" id="GO:0005886">
    <property type="term" value="C:plasma membrane"/>
    <property type="evidence" value="ECO:0007669"/>
    <property type="project" value="UniProtKB-SubCell"/>
</dbReference>
<dbReference type="GO" id="GO:0005525">
    <property type="term" value="F:GTP binding"/>
    <property type="evidence" value="ECO:0000318"/>
    <property type="project" value="GO_Central"/>
</dbReference>
<dbReference type="GO" id="GO:0003924">
    <property type="term" value="F:GTPase activity"/>
    <property type="evidence" value="ECO:0000318"/>
    <property type="project" value="GO_Central"/>
</dbReference>
<dbReference type="GO" id="GO:0006909">
    <property type="term" value="P:phagocytosis"/>
    <property type="evidence" value="ECO:0007007"/>
    <property type="project" value="dictyBase"/>
</dbReference>
<dbReference type="GO" id="GO:0016192">
    <property type="term" value="P:vesicle-mediated transport"/>
    <property type="evidence" value="ECO:0000318"/>
    <property type="project" value="GO_Central"/>
</dbReference>
<dbReference type="CDD" id="cd00154">
    <property type="entry name" value="Rab"/>
    <property type="match status" value="1"/>
</dbReference>
<dbReference type="FunFam" id="3.40.50.300:FF:002078">
    <property type="entry name" value="Ras-related protein RabQ"/>
    <property type="match status" value="1"/>
</dbReference>
<dbReference type="Gene3D" id="3.40.50.300">
    <property type="entry name" value="P-loop containing nucleotide triphosphate hydrolases"/>
    <property type="match status" value="1"/>
</dbReference>
<dbReference type="InterPro" id="IPR027417">
    <property type="entry name" value="P-loop_NTPase"/>
</dbReference>
<dbReference type="InterPro" id="IPR050209">
    <property type="entry name" value="Rab_GTPases_membrane_traffic"/>
</dbReference>
<dbReference type="InterPro" id="IPR005225">
    <property type="entry name" value="Small_GTP-bd"/>
</dbReference>
<dbReference type="InterPro" id="IPR001806">
    <property type="entry name" value="Small_GTPase"/>
</dbReference>
<dbReference type="NCBIfam" id="TIGR00231">
    <property type="entry name" value="small_GTP"/>
    <property type="match status" value="1"/>
</dbReference>
<dbReference type="PANTHER" id="PTHR47979">
    <property type="entry name" value="DRAB11-RELATED"/>
    <property type="match status" value="1"/>
</dbReference>
<dbReference type="Pfam" id="PF00071">
    <property type="entry name" value="Ras"/>
    <property type="match status" value="1"/>
</dbReference>
<dbReference type="PRINTS" id="PR00449">
    <property type="entry name" value="RASTRNSFRMNG"/>
</dbReference>
<dbReference type="SMART" id="SM00175">
    <property type="entry name" value="RAB"/>
    <property type="match status" value="1"/>
</dbReference>
<dbReference type="SMART" id="SM00176">
    <property type="entry name" value="RAN"/>
    <property type="match status" value="1"/>
</dbReference>
<dbReference type="SMART" id="SM00173">
    <property type="entry name" value="RAS"/>
    <property type="match status" value="1"/>
</dbReference>
<dbReference type="SMART" id="SM00174">
    <property type="entry name" value="RHO"/>
    <property type="match status" value="1"/>
</dbReference>
<dbReference type="SUPFAM" id="SSF52540">
    <property type="entry name" value="P-loop containing nucleoside triphosphate hydrolases"/>
    <property type="match status" value="1"/>
</dbReference>
<dbReference type="PROSITE" id="PS51419">
    <property type="entry name" value="RAB"/>
    <property type="match status" value="1"/>
</dbReference>
<feature type="chain" id="PRO_0000332766" description="Ras-related protein RabQ">
    <location>
        <begin position="1"/>
        <end position="204"/>
    </location>
</feature>
<feature type="short sequence motif" description="Effector region" evidence="1">
    <location>
        <begin position="34"/>
        <end position="42"/>
    </location>
</feature>
<feature type="binding site" evidence="1">
    <location>
        <begin position="12"/>
        <end position="19"/>
    </location>
    <ligand>
        <name>GTP</name>
        <dbReference type="ChEBI" id="CHEBI:37565"/>
    </ligand>
</feature>
<feature type="binding site" evidence="1">
    <location>
        <begin position="60"/>
        <end position="64"/>
    </location>
    <ligand>
        <name>GTP</name>
        <dbReference type="ChEBI" id="CHEBI:37565"/>
    </ligand>
</feature>
<feature type="binding site" evidence="1">
    <location>
        <begin position="118"/>
        <end position="121"/>
    </location>
    <ligand>
        <name>GTP</name>
        <dbReference type="ChEBI" id="CHEBI:37565"/>
    </ligand>
</feature>
<feature type="lipid moiety-binding region" description="S-geranylgeranyl cysteine" evidence="1">
    <location>
        <position position="202"/>
    </location>
</feature>
<feature type="lipid moiety-binding region" description="S-geranylgeranyl cysteine" evidence="1">
    <location>
        <position position="203"/>
    </location>
</feature>
<gene>
    <name type="primary">rabQ</name>
    <name type="ORF">DDB_G0268760</name>
</gene>
<organism>
    <name type="scientific">Dictyostelium discoideum</name>
    <name type="common">Social amoeba</name>
    <dbReference type="NCBI Taxonomy" id="44689"/>
    <lineage>
        <taxon>Eukaryota</taxon>
        <taxon>Amoebozoa</taxon>
        <taxon>Evosea</taxon>
        <taxon>Eumycetozoa</taxon>
        <taxon>Dictyostelia</taxon>
        <taxon>Dictyosteliales</taxon>
        <taxon>Dictyosteliaceae</taxon>
        <taxon>Dictyostelium</taxon>
    </lineage>
</organism>
<sequence length="204" mass="23047">MEEYHLKCIVTGPPFVGKSSLLLQFCEKEFSFEMDTTIGVEFQTRSILIDSSKIKLEIWDTAGQESFRSITTNYYRGAHIALLCYDITKRQSFQYLSGWMDEVRQMSSPNIVIALIGNKCDCKDKRVITTEEGAKNAKENDILFFETSAKDYESVESVFDGVSKKVLSLIKQGTLTVVNKKPQSIQLGAPTQETPKKPKSECCK</sequence>
<proteinExistence type="inferred from homology"/>
<evidence type="ECO:0000250" key="1"/>
<evidence type="ECO:0000305" key="2"/>
<keyword id="KW-1003">Cell membrane</keyword>
<keyword id="KW-0342">GTP-binding</keyword>
<keyword id="KW-0449">Lipoprotein</keyword>
<keyword id="KW-0472">Membrane</keyword>
<keyword id="KW-0547">Nucleotide-binding</keyword>
<keyword id="KW-0636">Prenylation</keyword>
<keyword id="KW-1185">Reference proteome</keyword>
<protein>
    <recommendedName>
        <fullName>Ras-related protein RabQ</fullName>
    </recommendedName>
</protein>
<reference key="1">
    <citation type="journal article" date="2005" name="Nature">
        <title>The genome of the social amoeba Dictyostelium discoideum.</title>
        <authorList>
            <person name="Eichinger L."/>
            <person name="Pachebat J.A."/>
            <person name="Gloeckner G."/>
            <person name="Rajandream M.A."/>
            <person name="Sucgang R."/>
            <person name="Berriman M."/>
            <person name="Song J."/>
            <person name="Olsen R."/>
            <person name="Szafranski K."/>
            <person name="Xu Q."/>
            <person name="Tunggal B."/>
            <person name="Kummerfeld S."/>
            <person name="Madera M."/>
            <person name="Konfortov B.A."/>
            <person name="Rivero F."/>
            <person name="Bankier A.T."/>
            <person name="Lehmann R."/>
            <person name="Hamlin N."/>
            <person name="Davies R."/>
            <person name="Gaudet P."/>
            <person name="Fey P."/>
            <person name="Pilcher K."/>
            <person name="Chen G."/>
            <person name="Saunders D."/>
            <person name="Sodergren E.J."/>
            <person name="Davis P."/>
            <person name="Kerhornou A."/>
            <person name="Nie X."/>
            <person name="Hall N."/>
            <person name="Anjard C."/>
            <person name="Hemphill L."/>
            <person name="Bason N."/>
            <person name="Farbrother P."/>
            <person name="Desany B."/>
            <person name="Just E."/>
            <person name="Morio T."/>
            <person name="Rost R."/>
            <person name="Churcher C.M."/>
            <person name="Cooper J."/>
            <person name="Haydock S."/>
            <person name="van Driessche N."/>
            <person name="Cronin A."/>
            <person name="Goodhead I."/>
            <person name="Muzny D.M."/>
            <person name="Mourier T."/>
            <person name="Pain A."/>
            <person name="Lu M."/>
            <person name="Harper D."/>
            <person name="Lindsay R."/>
            <person name="Hauser H."/>
            <person name="James K.D."/>
            <person name="Quiles M."/>
            <person name="Madan Babu M."/>
            <person name="Saito T."/>
            <person name="Buchrieser C."/>
            <person name="Wardroper A."/>
            <person name="Felder M."/>
            <person name="Thangavelu M."/>
            <person name="Johnson D."/>
            <person name="Knights A."/>
            <person name="Loulseged H."/>
            <person name="Mungall K.L."/>
            <person name="Oliver K."/>
            <person name="Price C."/>
            <person name="Quail M.A."/>
            <person name="Urushihara H."/>
            <person name="Hernandez J."/>
            <person name="Rabbinowitsch E."/>
            <person name="Steffen D."/>
            <person name="Sanders M."/>
            <person name="Ma J."/>
            <person name="Kohara Y."/>
            <person name="Sharp S."/>
            <person name="Simmonds M.N."/>
            <person name="Spiegler S."/>
            <person name="Tivey A."/>
            <person name="Sugano S."/>
            <person name="White B."/>
            <person name="Walker D."/>
            <person name="Woodward J.R."/>
            <person name="Winckler T."/>
            <person name="Tanaka Y."/>
            <person name="Shaulsky G."/>
            <person name="Schleicher M."/>
            <person name="Weinstock G.M."/>
            <person name="Rosenthal A."/>
            <person name="Cox E.C."/>
            <person name="Chisholm R.L."/>
            <person name="Gibbs R.A."/>
            <person name="Loomis W.F."/>
            <person name="Platzer M."/>
            <person name="Kay R.R."/>
            <person name="Williams J.G."/>
            <person name="Dear P.H."/>
            <person name="Noegel A.A."/>
            <person name="Barrell B.G."/>
            <person name="Kuspa A."/>
        </authorList>
    </citation>
    <scope>NUCLEOTIDE SEQUENCE [LARGE SCALE GENOMIC DNA]</scope>
    <source>
        <strain>AX4</strain>
    </source>
</reference>